<name>KDSA_ECOUT</name>
<evidence type="ECO:0000255" key="1">
    <source>
        <dbReference type="HAMAP-Rule" id="MF_00056"/>
    </source>
</evidence>
<gene>
    <name evidence="1" type="primary">kdsA</name>
    <name type="ordered locus">UTI89_C1409</name>
</gene>
<protein>
    <recommendedName>
        <fullName evidence="1">2-dehydro-3-deoxyphosphooctonate aldolase</fullName>
        <ecNumber evidence="1">2.5.1.55</ecNumber>
    </recommendedName>
    <alternativeName>
        <fullName evidence="1">3-deoxy-D-manno-octulosonic acid 8-phosphate synthase</fullName>
    </alternativeName>
    <alternativeName>
        <fullName evidence="1">KDO-8-phosphate synthase</fullName>
        <shortName evidence="1">KDO 8-P synthase</shortName>
        <shortName evidence="1">KDOPS</shortName>
    </alternativeName>
    <alternativeName>
        <fullName evidence="1">Phospho-2-dehydro-3-deoxyoctonate aldolase</fullName>
    </alternativeName>
</protein>
<accession>Q1RCM3</accession>
<organism>
    <name type="scientific">Escherichia coli (strain UTI89 / UPEC)</name>
    <dbReference type="NCBI Taxonomy" id="364106"/>
    <lineage>
        <taxon>Bacteria</taxon>
        <taxon>Pseudomonadati</taxon>
        <taxon>Pseudomonadota</taxon>
        <taxon>Gammaproteobacteria</taxon>
        <taxon>Enterobacterales</taxon>
        <taxon>Enterobacteriaceae</taxon>
        <taxon>Escherichia</taxon>
    </lineage>
</organism>
<dbReference type="EC" id="2.5.1.55" evidence="1"/>
<dbReference type="EMBL" id="CP000243">
    <property type="protein sequence ID" value="ABE06891.1"/>
    <property type="molecule type" value="Genomic_DNA"/>
</dbReference>
<dbReference type="RefSeq" id="WP_000811065.1">
    <property type="nucleotide sequence ID" value="NZ_CP064825.1"/>
</dbReference>
<dbReference type="SMR" id="Q1RCM3"/>
<dbReference type="GeneID" id="75203328"/>
<dbReference type="KEGG" id="eci:UTI89_C1409"/>
<dbReference type="HOGENOM" id="CLU_036666_0_0_6"/>
<dbReference type="UniPathway" id="UPA00030"/>
<dbReference type="UniPathway" id="UPA00357">
    <property type="reaction ID" value="UER00474"/>
</dbReference>
<dbReference type="Proteomes" id="UP000001952">
    <property type="component" value="Chromosome"/>
</dbReference>
<dbReference type="GO" id="GO:0005737">
    <property type="term" value="C:cytoplasm"/>
    <property type="evidence" value="ECO:0007669"/>
    <property type="project" value="UniProtKB-SubCell"/>
</dbReference>
<dbReference type="GO" id="GO:0008676">
    <property type="term" value="F:3-deoxy-8-phosphooctulonate synthase activity"/>
    <property type="evidence" value="ECO:0007669"/>
    <property type="project" value="UniProtKB-UniRule"/>
</dbReference>
<dbReference type="GO" id="GO:0019294">
    <property type="term" value="P:keto-3-deoxy-D-manno-octulosonic acid biosynthetic process"/>
    <property type="evidence" value="ECO:0007669"/>
    <property type="project" value="UniProtKB-UniRule"/>
</dbReference>
<dbReference type="FunFam" id="3.20.20.70:FF:000058">
    <property type="entry name" value="2-dehydro-3-deoxyphosphooctonate aldolase"/>
    <property type="match status" value="1"/>
</dbReference>
<dbReference type="Gene3D" id="3.20.20.70">
    <property type="entry name" value="Aldolase class I"/>
    <property type="match status" value="1"/>
</dbReference>
<dbReference type="HAMAP" id="MF_00056">
    <property type="entry name" value="KDO8P_synth"/>
    <property type="match status" value="1"/>
</dbReference>
<dbReference type="InterPro" id="IPR013785">
    <property type="entry name" value="Aldolase_TIM"/>
</dbReference>
<dbReference type="InterPro" id="IPR006218">
    <property type="entry name" value="DAHP1/KDSA"/>
</dbReference>
<dbReference type="InterPro" id="IPR006269">
    <property type="entry name" value="KDO8P_synthase"/>
</dbReference>
<dbReference type="NCBIfam" id="TIGR01362">
    <property type="entry name" value="KDO8P_synth"/>
    <property type="match status" value="1"/>
</dbReference>
<dbReference type="NCBIfam" id="NF003543">
    <property type="entry name" value="PRK05198.1"/>
    <property type="match status" value="1"/>
</dbReference>
<dbReference type="NCBIfam" id="NF009109">
    <property type="entry name" value="PRK12457.1"/>
    <property type="match status" value="1"/>
</dbReference>
<dbReference type="PANTHER" id="PTHR21057">
    <property type="entry name" value="PHOSPHO-2-DEHYDRO-3-DEOXYHEPTONATE ALDOLASE"/>
    <property type="match status" value="1"/>
</dbReference>
<dbReference type="Pfam" id="PF00793">
    <property type="entry name" value="DAHP_synth_1"/>
    <property type="match status" value="1"/>
</dbReference>
<dbReference type="SUPFAM" id="SSF51569">
    <property type="entry name" value="Aldolase"/>
    <property type="match status" value="1"/>
</dbReference>
<sequence length="284" mass="30833">MKQKVVSIGDINVANDLPFVLFGGMNVLESRDLAMRICEHYVTVTQKLGIPYVFKASFDKANRSSIHSYRGPGLEEGMKIFQELKQTFGVKIITDVHEPSQAQPVADVVDVIQLPAFLARQTDLVEAMAKTGAVINVKKPQFVSPGQMGNIVDKFKEGGNEKVILCDRGANFGYDNLVVDMLGFSIMKKVSGNSPVIFDVTHALQCRDPFGAASGGRRAQVAELARAGMAVGLAGLFIEAHPDPEHAKCDGPSALPLAKLEPFLKQMKAIDDLVKGFEELDTSK</sequence>
<reference key="1">
    <citation type="journal article" date="2006" name="Proc. Natl. Acad. Sci. U.S.A.">
        <title>Identification of genes subject to positive selection in uropathogenic strains of Escherichia coli: a comparative genomics approach.</title>
        <authorList>
            <person name="Chen S.L."/>
            <person name="Hung C.-S."/>
            <person name="Xu J."/>
            <person name="Reigstad C.S."/>
            <person name="Magrini V."/>
            <person name="Sabo A."/>
            <person name="Blasiar D."/>
            <person name="Bieri T."/>
            <person name="Meyer R.R."/>
            <person name="Ozersky P."/>
            <person name="Armstrong J.R."/>
            <person name="Fulton R.S."/>
            <person name="Latreille J.P."/>
            <person name="Spieth J."/>
            <person name="Hooton T.M."/>
            <person name="Mardis E.R."/>
            <person name="Hultgren S.J."/>
            <person name="Gordon J.I."/>
        </authorList>
    </citation>
    <scope>NUCLEOTIDE SEQUENCE [LARGE SCALE GENOMIC DNA]</scope>
    <source>
        <strain>UTI89 / UPEC</strain>
    </source>
</reference>
<feature type="chain" id="PRO_0000304448" description="2-dehydro-3-deoxyphosphooctonate aldolase">
    <location>
        <begin position="1"/>
        <end position="284"/>
    </location>
</feature>
<comment type="catalytic activity">
    <reaction evidence="1">
        <text>D-arabinose 5-phosphate + phosphoenolpyruvate + H2O = 3-deoxy-alpha-D-manno-2-octulosonate-8-phosphate + phosphate</text>
        <dbReference type="Rhea" id="RHEA:14053"/>
        <dbReference type="ChEBI" id="CHEBI:15377"/>
        <dbReference type="ChEBI" id="CHEBI:43474"/>
        <dbReference type="ChEBI" id="CHEBI:57693"/>
        <dbReference type="ChEBI" id="CHEBI:58702"/>
        <dbReference type="ChEBI" id="CHEBI:85985"/>
        <dbReference type="EC" id="2.5.1.55"/>
    </reaction>
</comment>
<comment type="pathway">
    <text evidence="1">Carbohydrate biosynthesis; 3-deoxy-D-manno-octulosonate biosynthesis; 3-deoxy-D-manno-octulosonate from D-ribulose 5-phosphate: step 2/3.</text>
</comment>
<comment type="pathway">
    <text evidence="1">Bacterial outer membrane biogenesis; lipopolysaccharide biosynthesis.</text>
</comment>
<comment type="subcellular location">
    <subcellularLocation>
        <location evidence="1">Cytoplasm</location>
    </subcellularLocation>
</comment>
<comment type="similarity">
    <text evidence="1">Belongs to the KdsA family.</text>
</comment>
<keyword id="KW-0963">Cytoplasm</keyword>
<keyword id="KW-0448">Lipopolysaccharide biosynthesis</keyword>
<keyword id="KW-0808">Transferase</keyword>
<proteinExistence type="inferred from homology"/>